<feature type="initiator methionine" description="Removed" evidence="5">
    <location>
        <position position="1"/>
    </location>
</feature>
<feature type="chain" id="PRO_0000155021" description="Elongation factor 1-beta">
    <location>
        <begin position="2"/>
        <end position="225"/>
    </location>
</feature>
<feature type="domain" description="GST C-terminal">
    <location>
        <begin position="2"/>
        <end position="84"/>
    </location>
</feature>
<feature type="region of interest" description="Disordered" evidence="4">
    <location>
        <begin position="78"/>
        <end position="115"/>
    </location>
</feature>
<feature type="compositionally biased region" description="Acidic residues" evidence="4">
    <location>
        <begin position="96"/>
        <end position="113"/>
    </location>
</feature>
<feature type="modified residue" description="N6-acetyllysine" evidence="15">
    <location>
        <position position="7"/>
    </location>
</feature>
<feature type="modified residue" description="Phosphoserine" evidence="12 16 18 19">
    <location>
        <position position="8"/>
    </location>
</feature>
<feature type="modified residue" description="Phosphoserine" evidence="20">
    <location>
        <position position="42"/>
    </location>
</feature>
<feature type="modified residue" description="Phosphothreonine" evidence="2">
    <location>
        <position position="88"/>
    </location>
</feature>
<feature type="modified residue" description="Phosphothreonine" evidence="18">
    <location>
        <position position="93"/>
    </location>
</feature>
<feature type="modified residue" description="Phosphoserine" evidence="12 16 17 18 19">
    <location>
        <position position="95"/>
    </location>
</feature>
<feature type="modified residue" description="Phosphoserine" evidence="8 9 10 11 12 13 14 16 17 18 19 20">
    <location>
        <position position="106"/>
    </location>
</feature>
<feature type="modified residue" description="Phosphoserine" evidence="19">
    <location>
        <position position="174"/>
    </location>
</feature>
<feature type="cross-link" description="Glycyl lysine isopeptide (Lys-Gly) (interchain with G-Cter in SUMO2)" evidence="21">
    <location>
        <position position="147"/>
    </location>
</feature>
<feature type="helix" evidence="23">
    <location>
        <begin position="9"/>
        <end position="18"/>
    </location>
</feature>
<feature type="turn" evidence="23">
    <location>
        <begin position="19"/>
        <end position="21"/>
    </location>
</feature>
<feature type="strand" evidence="23">
    <location>
        <begin position="23"/>
        <end position="26"/>
    </location>
</feature>
<feature type="helix" evidence="23">
    <location>
        <begin position="32"/>
        <end position="41"/>
    </location>
</feature>
<feature type="helix" evidence="23">
    <location>
        <begin position="50"/>
        <end position="60"/>
    </location>
</feature>
<feature type="helix" evidence="23">
    <location>
        <begin position="61"/>
        <end position="65"/>
    </location>
</feature>
<feature type="strand" evidence="23">
    <location>
        <begin position="69"/>
        <end position="71"/>
    </location>
</feature>
<feature type="helix" evidence="23">
    <location>
        <begin position="76"/>
        <end position="78"/>
    </location>
</feature>
<feature type="strand" evidence="23">
    <location>
        <begin position="79"/>
        <end position="81"/>
    </location>
</feature>
<feature type="strand" evidence="22">
    <location>
        <begin position="140"/>
        <end position="150"/>
    </location>
</feature>
<feature type="helix" evidence="22">
    <location>
        <begin position="155"/>
        <end position="164"/>
    </location>
</feature>
<feature type="strand" evidence="22">
    <location>
        <begin position="171"/>
        <end position="183"/>
    </location>
</feature>
<feature type="strand" evidence="22">
    <location>
        <begin position="185"/>
        <end position="193"/>
    </location>
</feature>
<feature type="helix" evidence="22">
    <location>
        <begin position="200"/>
        <end position="207"/>
    </location>
</feature>
<feature type="turn" evidence="22">
    <location>
        <begin position="211"/>
        <end position="213"/>
    </location>
</feature>
<feature type="strand" evidence="22">
    <location>
        <begin position="214"/>
        <end position="220"/>
    </location>
</feature>
<protein>
    <recommendedName>
        <fullName>Elongation factor 1-beta</fullName>
        <shortName>EF-1-beta</shortName>
    </recommendedName>
    <alternativeName>
        <fullName evidence="7">eEF-1B alpha</fullName>
    </alternativeName>
</protein>
<proteinExistence type="evidence at protein level"/>
<dbReference type="EMBL" id="X60489">
    <property type="protein sequence ID" value="CAA43019.1"/>
    <property type="molecule type" value="mRNA"/>
</dbReference>
<dbReference type="EMBL" id="X60656">
    <property type="protein sequence ID" value="CAA43063.1"/>
    <property type="molecule type" value="mRNA"/>
</dbReference>
<dbReference type="EMBL" id="BT007079">
    <property type="protein sequence ID" value="AAP35742.1"/>
    <property type="molecule type" value="mRNA"/>
</dbReference>
<dbReference type="EMBL" id="CR456825">
    <property type="protein sequence ID" value="CAG33106.1"/>
    <property type="molecule type" value="mRNA"/>
</dbReference>
<dbReference type="EMBL" id="AK291910">
    <property type="protein sequence ID" value="BAF84599.1"/>
    <property type="molecule type" value="mRNA"/>
</dbReference>
<dbReference type="EMBL" id="AC007383">
    <property type="protein sequence ID" value="AAY15062.1"/>
    <property type="molecule type" value="Genomic_DNA"/>
</dbReference>
<dbReference type="EMBL" id="CH471063">
    <property type="protein sequence ID" value="EAW70381.1"/>
    <property type="molecule type" value="Genomic_DNA"/>
</dbReference>
<dbReference type="EMBL" id="BC000211">
    <property type="protein sequence ID" value="AAH00211.1"/>
    <property type="molecule type" value="mRNA"/>
</dbReference>
<dbReference type="EMBL" id="BC004931">
    <property type="protein sequence ID" value="AAH04931.1"/>
    <property type="molecule type" value="mRNA"/>
</dbReference>
<dbReference type="EMBL" id="BC067787">
    <property type="protein sequence ID" value="AAH67787.1"/>
    <property type="molecule type" value="mRNA"/>
</dbReference>
<dbReference type="CCDS" id="CCDS2367.1"/>
<dbReference type="PIR" id="S25432">
    <property type="entry name" value="S25432"/>
</dbReference>
<dbReference type="RefSeq" id="NP_001032752.1">
    <property type="nucleotide sequence ID" value="NM_001037663.2"/>
</dbReference>
<dbReference type="RefSeq" id="NP_001950.1">
    <property type="nucleotide sequence ID" value="NM_001959.4"/>
</dbReference>
<dbReference type="RefSeq" id="NP_066944.1">
    <property type="nucleotide sequence ID" value="NM_021121.4"/>
</dbReference>
<dbReference type="PDB" id="1B64">
    <property type="method" value="NMR"/>
    <property type="chains" value="A=136-225"/>
</dbReference>
<dbReference type="PDB" id="5DQS">
    <property type="method" value="X-ray"/>
    <property type="resolution" value="2.10 A"/>
    <property type="chains" value="D=1-88"/>
</dbReference>
<dbReference type="PDBsum" id="1B64"/>
<dbReference type="PDBsum" id="5DQS"/>
<dbReference type="BMRB" id="P24534"/>
<dbReference type="SMR" id="P24534"/>
<dbReference type="BioGRID" id="108253">
    <property type="interactions" value="211"/>
</dbReference>
<dbReference type="FunCoup" id="P24534">
    <property type="interactions" value="2884"/>
</dbReference>
<dbReference type="IntAct" id="P24534">
    <property type="interactions" value="85"/>
</dbReference>
<dbReference type="MINT" id="P24534"/>
<dbReference type="STRING" id="9606.ENSP00000376055"/>
<dbReference type="ChEMBL" id="CHEMBL4295731"/>
<dbReference type="GlyGen" id="P24534">
    <property type="glycosylation" value="1 site, 1 O-linked glycan (1 site)"/>
</dbReference>
<dbReference type="iPTMnet" id="P24534"/>
<dbReference type="PhosphoSitePlus" id="P24534"/>
<dbReference type="SwissPalm" id="P24534"/>
<dbReference type="BioMuta" id="EEF1B2"/>
<dbReference type="DMDM" id="119163"/>
<dbReference type="OGP" id="P24534"/>
<dbReference type="CPTAC" id="CPTAC-66"/>
<dbReference type="CPTAC" id="CPTAC-67"/>
<dbReference type="jPOST" id="P24534"/>
<dbReference type="MassIVE" id="P24534"/>
<dbReference type="PaxDb" id="9606-ENSP00000376056"/>
<dbReference type="PeptideAtlas" id="P24534"/>
<dbReference type="PRIDE" id="P24534"/>
<dbReference type="ProteomicsDB" id="54214"/>
<dbReference type="Pumba" id="P24534"/>
<dbReference type="TopDownProteomics" id="P24534"/>
<dbReference type="Antibodypedia" id="34177">
    <property type="antibodies" value="217 antibodies from 30 providers"/>
</dbReference>
<dbReference type="DNASU" id="1933"/>
<dbReference type="Ensembl" id="ENST00000236957.9">
    <property type="protein sequence ID" value="ENSP00000236957.5"/>
    <property type="gene ID" value="ENSG00000114942.15"/>
</dbReference>
<dbReference type="Ensembl" id="ENST00000392222.7">
    <property type="protein sequence ID" value="ENSP00000376056.2"/>
    <property type="gene ID" value="ENSG00000114942.15"/>
</dbReference>
<dbReference type="Ensembl" id="ENST00000445505.6">
    <property type="protein sequence ID" value="ENSP00000407730.2"/>
    <property type="gene ID" value="ENSG00000114942.15"/>
</dbReference>
<dbReference type="Ensembl" id="ENST00000635728.1">
    <property type="protein sequence ID" value="ENSP00000489993.1"/>
    <property type="gene ID" value="ENSG00000283391.3"/>
</dbReference>
<dbReference type="Ensembl" id="ENST00000636275.2">
    <property type="protein sequence ID" value="ENSP00000490326.1"/>
    <property type="gene ID" value="ENSG00000283391.3"/>
</dbReference>
<dbReference type="Ensembl" id="ENST00000637452.2">
    <property type="protein sequence ID" value="ENSP00000490885.2"/>
    <property type="gene ID" value="ENSG00000283391.3"/>
</dbReference>
<dbReference type="GeneID" id="1933"/>
<dbReference type="KEGG" id="hsa:1933"/>
<dbReference type="MANE-Select" id="ENST00000392222.7">
    <property type="protein sequence ID" value="ENSP00000376056.2"/>
    <property type="RefSeq nucleotide sequence ID" value="NM_001959.4"/>
    <property type="RefSeq protein sequence ID" value="NP_001950.1"/>
</dbReference>
<dbReference type="UCSC" id="uc002vbf.2">
    <property type="organism name" value="human"/>
</dbReference>
<dbReference type="AGR" id="HGNC:3208"/>
<dbReference type="CTD" id="1933"/>
<dbReference type="DisGeNET" id="1933"/>
<dbReference type="GeneCards" id="EEF1B2"/>
<dbReference type="HGNC" id="HGNC:3208">
    <property type="gene designation" value="EEF1B2"/>
</dbReference>
<dbReference type="HPA" id="ENSG00000114942">
    <property type="expression patterns" value="Low tissue specificity"/>
</dbReference>
<dbReference type="MalaCards" id="EEF1B2"/>
<dbReference type="MIM" id="600655">
    <property type="type" value="gene"/>
</dbReference>
<dbReference type="neXtProt" id="NX_P24534"/>
<dbReference type="OpenTargets" id="ENSG00000114942"/>
<dbReference type="Orphanet" id="88616">
    <property type="disease" value="Autosomal recessive non-syndromic intellectual disability"/>
</dbReference>
<dbReference type="PharmGKB" id="PA27644"/>
<dbReference type="VEuPathDB" id="HostDB:ENSG00000114942"/>
<dbReference type="eggNOG" id="KOG1668">
    <property type="taxonomic scope" value="Eukaryota"/>
</dbReference>
<dbReference type="GeneTree" id="ENSGT00950000183014"/>
<dbReference type="HOGENOM" id="CLU_050172_0_0_1"/>
<dbReference type="InParanoid" id="P24534"/>
<dbReference type="OMA" id="YRWYKHI"/>
<dbReference type="OrthoDB" id="331763at2759"/>
<dbReference type="PAN-GO" id="P24534">
    <property type="GO annotations" value="3 GO annotations based on evolutionary models"/>
</dbReference>
<dbReference type="PhylomeDB" id="P24534"/>
<dbReference type="TreeFam" id="TF313134"/>
<dbReference type="PathwayCommons" id="P24534"/>
<dbReference type="Reactome" id="R-HSA-156842">
    <property type="pathway name" value="Eukaryotic Translation Elongation"/>
</dbReference>
<dbReference type="SignaLink" id="P24534"/>
<dbReference type="SIGNOR" id="P24534"/>
<dbReference type="BioGRID-ORCS" id="1933">
    <property type="hits" value="620 hits in 1069 CRISPR screens"/>
</dbReference>
<dbReference type="CD-CODE" id="91857CE7">
    <property type="entry name" value="Nucleolus"/>
</dbReference>
<dbReference type="ChiTaRS" id="EEF1B2">
    <property type="organism name" value="human"/>
</dbReference>
<dbReference type="EvolutionaryTrace" id="P24534"/>
<dbReference type="GeneWiki" id="EEF1B2"/>
<dbReference type="GenomeRNAi" id="1933"/>
<dbReference type="Pharos" id="P24534">
    <property type="development level" value="Tbio"/>
</dbReference>
<dbReference type="PRO" id="PR:P24534"/>
<dbReference type="Proteomes" id="UP000005640">
    <property type="component" value="Chromosome 2"/>
</dbReference>
<dbReference type="RNAct" id="P24534">
    <property type="molecule type" value="protein"/>
</dbReference>
<dbReference type="Bgee" id="ENSG00000114942">
    <property type="expression patterns" value="Expressed in body of pancreas and 101 other cell types or tissues"/>
</dbReference>
<dbReference type="ExpressionAtlas" id="P24534">
    <property type="expression patterns" value="baseline and differential"/>
</dbReference>
<dbReference type="GO" id="GO:0005737">
    <property type="term" value="C:cytoplasm"/>
    <property type="evidence" value="ECO:0000314"/>
    <property type="project" value="UniProtKB"/>
</dbReference>
<dbReference type="GO" id="GO:0005829">
    <property type="term" value="C:cytosol"/>
    <property type="evidence" value="ECO:0000318"/>
    <property type="project" value="GO_Central"/>
</dbReference>
<dbReference type="GO" id="GO:0005853">
    <property type="term" value="C:eukaryotic translation elongation factor 1 complex"/>
    <property type="evidence" value="ECO:0000303"/>
    <property type="project" value="UniProtKB"/>
</dbReference>
<dbReference type="GO" id="GO:0005085">
    <property type="term" value="F:guanyl-nucleotide exchange factor activity"/>
    <property type="evidence" value="ECO:0000318"/>
    <property type="project" value="GO_Central"/>
</dbReference>
<dbReference type="GO" id="GO:0003746">
    <property type="term" value="F:translation elongation factor activity"/>
    <property type="evidence" value="ECO:0000303"/>
    <property type="project" value="UniProtKB"/>
</dbReference>
<dbReference type="GO" id="GO:0045471">
    <property type="term" value="P:response to ethanol"/>
    <property type="evidence" value="ECO:0007669"/>
    <property type="project" value="Ensembl"/>
</dbReference>
<dbReference type="GO" id="GO:0006414">
    <property type="term" value="P:translational elongation"/>
    <property type="evidence" value="ECO:0000318"/>
    <property type="project" value="GO_Central"/>
</dbReference>
<dbReference type="CDD" id="cd00292">
    <property type="entry name" value="EF1B"/>
    <property type="match status" value="1"/>
</dbReference>
<dbReference type="CDD" id="cd10308">
    <property type="entry name" value="GST_C_eEF1b_like"/>
    <property type="match status" value="1"/>
</dbReference>
<dbReference type="FunFam" id="3.30.70.60:FF:000001">
    <property type="entry name" value="Elongation factor 1-beta 1 like"/>
    <property type="match status" value="1"/>
</dbReference>
<dbReference type="FunFam" id="1.20.1050.130:FF:000001">
    <property type="entry name" value="Putative Elongation factor 1-beta"/>
    <property type="match status" value="1"/>
</dbReference>
<dbReference type="Gene3D" id="1.20.1050.130">
    <property type="match status" value="1"/>
</dbReference>
<dbReference type="Gene3D" id="3.30.70.60">
    <property type="match status" value="1"/>
</dbReference>
<dbReference type="InterPro" id="IPR036219">
    <property type="entry name" value="eEF-1beta-like_sf"/>
</dbReference>
<dbReference type="InterPro" id="IPR018940">
    <property type="entry name" value="EF-1_beta_acid_region_euk"/>
</dbReference>
<dbReference type="InterPro" id="IPR049720">
    <property type="entry name" value="EF1B_bsu/dsu"/>
</dbReference>
<dbReference type="InterPro" id="IPR014038">
    <property type="entry name" value="EF1B_bsu/dsu_GNE"/>
</dbReference>
<dbReference type="InterPro" id="IPR036282">
    <property type="entry name" value="Glutathione-S-Trfase_C_sf"/>
</dbReference>
<dbReference type="InterPro" id="IPR014717">
    <property type="entry name" value="Transl_elong_EF1B/ribsomal_bS6"/>
</dbReference>
<dbReference type="InterPro" id="IPR001326">
    <property type="entry name" value="Transl_elong_EF1B_B/D_CS"/>
</dbReference>
<dbReference type="PANTHER" id="PTHR11595">
    <property type="entry name" value="EF-HAND AND COILED-COIL DOMAIN-CONTAINING FAMILY MEMBER"/>
    <property type="match status" value="1"/>
</dbReference>
<dbReference type="PANTHER" id="PTHR11595:SF60">
    <property type="entry name" value="ELONGATION FACTOR 1-BETA"/>
    <property type="match status" value="1"/>
</dbReference>
<dbReference type="Pfam" id="PF10587">
    <property type="entry name" value="EF-1_beta_acid"/>
    <property type="match status" value="1"/>
</dbReference>
<dbReference type="Pfam" id="PF00736">
    <property type="entry name" value="EF1_GNE"/>
    <property type="match status" value="1"/>
</dbReference>
<dbReference type="SMART" id="SM01182">
    <property type="entry name" value="EF-1_beta_acid"/>
    <property type="match status" value="1"/>
</dbReference>
<dbReference type="SMART" id="SM00888">
    <property type="entry name" value="EF1_GNE"/>
    <property type="match status" value="1"/>
</dbReference>
<dbReference type="SUPFAM" id="SSF54984">
    <property type="entry name" value="eEF-1beta-like"/>
    <property type="match status" value="1"/>
</dbReference>
<dbReference type="SUPFAM" id="SSF47616">
    <property type="entry name" value="GST C-terminal domain-like"/>
    <property type="match status" value="1"/>
</dbReference>
<dbReference type="PROSITE" id="PS00824">
    <property type="entry name" value="EF1BD_1"/>
    <property type="match status" value="1"/>
</dbReference>
<dbReference type="PROSITE" id="PS00825">
    <property type="entry name" value="EF1BD_2"/>
    <property type="match status" value="1"/>
</dbReference>
<sequence>MGFGDLKSPAGLQVLNDYLADKSYIEGYVPSQADVAVFEAVSSPPPADLCHALRWYNHIKSYEKEKASLPGVKKALGKYGPADVEDTTGSGATDSKDDDDIDLFGSDDEEESEEAKRLREERLAQYESKKAKKPALVAKSSILLDVKPWDDETDMAKLEECVRSIQADGLVWGSSKLVPVGYGIKKLQIQCVVEDDKVGTDMLEEQITAFEDYVQSMDVAAFNKI</sequence>
<organism>
    <name type="scientific">Homo sapiens</name>
    <name type="common">Human</name>
    <dbReference type="NCBI Taxonomy" id="9606"/>
    <lineage>
        <taxon>Eukaryota</taxon>
        <taxon>Metazoa</taxon>
        <taxon>Chordata</taxon>
        <taxon>Craniata</taxon>
        <taxon>Vertebrata</taxon>
        <taxon>Euteleostomi</taxon>
        <taxon>Mammalia</taxon>
        <taxon>Eutheria</taxon>
        <taxon>Euarchontoglires</taxon>
        <taxon>Primates</taxon>
        <taxon>Haplorrhini</taxon>
        <taxon>Catarrhini</taxon>
        <taxon>Hominidae</taxon>
        <taxon>Homo</taxon>
    </lineage>
</organism>
<gene>
    <name type="primary">EEF1B2</name>
    <name type="synonym">EEF1B</name>
    <name type="synonym">EF1B</name>
</gene>
<accession>P24534</accession>
<accession>A8K795</accession>
<accession>Q6IBH9</accession>
<keyword id="KW-0002">3D-structure</keyword>
<keyword id="KW-0007">Acetylation</keyword>
<keyword id="KW-0903">Direct protein sequencing</keyword>
<keyword id="KW-0251">Elongation factor</keyword>
<keyword id="KW-1017">Isopeptide bond</keyword>
<keyword id="KW-0597">Phosphoprotein</keyword>
<keyword id="KW-0648">Protein biosynthesis</keyword>
<keyword id="KW-1267">Proteomics identification</keyword>
<keyword id="KW-1185">Reference proteome</keyword>
<keyword id="KW-0832">Ubl conjugation</keyword>
<name>EF1B_HUMAN</name>
<reference key="1">
    <citation type="journal article" date="1991" name="Nucleic Acids Res.">
        <title>Nucleotide sequence of human elongation factor-1 beta cDNA.</title>
        <authorList>
            <person name="Sanders J."/>
            <person name="Maassen J.A."/>
            <person name="Amons R."/>
            <person name="Moeller W."/>
        </authorList>
    </citation>
    <scope>NUCLEOTIDE SEQUENCE [MRNA]</scope>
    <source>
        <tissue>Skin fibroblast</tissue>
    </source>
</reference>
<reference key="2">
    <citation type="journal article" date="1991" name="Biochem. Biophys. Res. Commun.">
        <title>Human elongation factor 1 beta: cDNA and derived amino acid sequence.</title>
        <authorList>
            <person name="von der Kammer H."/>
            <person name="Klaudiny J."/>
            <person name="Zimmer M."/>
            <person name="Scheit K.H."/>
        </authorList>
    </citation>
    <scope>NUCLEOTIDE SEQUENCE [MRNA]</scope>
    <source>
        <tissue>Ovarian granulosa cell</tissue>
    </source>
</reference>
<reference key="3">
    <citation type="submission" date="2003-05" db="EMBL/GenBank/DDBJ databases">
        <title>Cloning of human full-length CDSs in BD Creator(TM) system donor vector.</title>
        <authorList>
            <person name="Kalnine N."/>
            <person name="Chen X."/>
            <person name="Rolfs A."/>
            <person name="Halleck A."/>
            <person name="Hines L."/>
            <person name="Eisenstein S."/>
            <person name="Koundinya M."/>
            <person name="Raphael J."/>
            <person name="Moreira D."/>
            <person name="Kelley T."/>
            <person name="LaBaer J."/>
            <person name="Lin Y."/>
            <person name="Phelan M."/>
            <person name="Farmer A."/>
        </authorList>
    </citation>
    <scope>NUCLEOTIDE SEQUENCE [LARGE SCALE MRNA]</scope>
</reference>
<reference key="4">
    <citation type="submission" date="2004-06" db="EMBL/GenBank/DDBJ databases">
        <title>Cloning of human full open reading frames in Gateway(TM) system entry vector (pDONR201).</title>
        <authorList>
            <person name="Ebert L."/>
            <person name="Schick M."/>
            <person name="Neubert P."/>
            <person name="Schatten R."/>
            <person name="Henze S."/>
            <person name="Korn B."/>
        </authorList>
    </citation>
    <scope>NUCLEOTIDE SEQUENCE [LARGE SCALE MRNA]</scope>
</reference>
<reference key="5">
    <citation type="journal article" date="2004" name="Nat. Genet.">
        <title>Complete sequencing and characterization of 21,243 full-length human cDNAs.</title>
        <authorList>
            <person name="Ota T."/>
            <person name="Suzuki Y."/>
            <person name="Nishikawa T."/>
            <person name="Otsuki T."/>
            <person name="Sugiyama T."/>
            <person name="Irie R."/>
            <person name="Wakamatsu A."/>
            <person name="Hayashi K."/>
            <person name="Sato H."/>
            <person name="Nagai K."/>
            <person name="Kimura K."/>
            <person name="Makita H."/>
            <person name="Sekine M."/>
            <person name="Obayashi M."/>
            <person name="Nishi T."/>
            <person name="Shibahara T."/>
            <person name="Tanaka T."/>
            <person name="Ishii S."/>
            <person name="Yamamoto J."/>
            <person name="Saito K."/>
            <person name="Kawai Y."/>
            <person name="Isono Y."/>
            <person name="Nakamura Y."/>
            <person name="Nagahari K."/>
            <person name="Murakami K."/>
            <person name="Yasuda T."/>
            <person name="Iwayanagi T."/>
            <person name="Wagatsuma M."/>
            <person name="Shiratori A."/>
            <person name="Sudo H."/>
            <person name="Hosoiri T."/>
            <person name="Kaku Y."/>
            <person name="Kodaira H."/>
            <person name="Kondo H."/>
            <person name="Sugawara M."/>
            <person name="Takahashi M."/>
            <person name="Kanda K."/>
            <person name="Yokoi T."/>
            <person name="Furuya T."/>
            <person name="Kikkawa E."/>
            <person name="Omura Y."/>
            <person name="Abe K."/>
            <person name="Kamihara K."/>
            <person name="Katsuta N."/>
            <person name="Sato K."/>
            <person name="Tanikawa M."/>
            <person name="Yamazaki M."/>
            <person name="Ninomiya K."/>
            <person name="Ishibashi T."/>
            <person name="Yamashita H."/>
            <person name="Murakawa K."/>
            <person name="Fujimori K."/>
            <person name="Tanai H."/>
            <person name="Kimata M."/>
            <person name="Watanabe M."/>
            <person name="Hiraoka S."/>
            <person name="Chiba Y."/>
            <person name="Ishida S."/>
            <person name="Ono Y."/>
            <person name="Takiguchi S."/>
            <person name="Watanabe S."/>
            <person name="Yosida M."/>
            <person name="Hotuta T."/>
            <person name="Kusano J."/>
            <person name="Kanehori K."/>
            <person name="Takahashi-Fujii A."/>
            <person name="Hara H."/>
            <person name="Tanase T.-O."/>
            <person name="Nomura Y."/>
            <person name="Togiya S."/>
            <person name="Komai F."/>
            <person name="Hara R."/>
            <person name="Takeuchi K."/>
            <person name="Arita M."/>
            <person name="Imose N."/>
            <person name="Musashino K."/>
            <person name="Yuuki H."/>
            <person name="Oshima A."/>
            <person name="Sasaki N."/>
            <person name="Aotsuka S."/>
            <person name="Yoshikawa Y."/>
            <person name="Matsunawa H."/>
            <person name="Ichihara T."/>
            <person name="Shiohata N."/>
            <person name="Sano S."/>
            <person name="Moriya S."/>
            <person name="Momiyama H."/>
            <person name="Satoh N."/>
            <person name="Takami S."/>
            <person name="Terashima Y."/>
            <person name="Suzuki O."/>
            <person name="Nakagawa S."/>
            <person name="Senoh A."/>
            <person name="Mizoguchi H."/>
            <person name="Goto Y."/>
            <person name="Shimizu F."/>
            <person name="Wakebe H."/>
            <person name="Hishigaki H."/>
            <person name="Watanabe T."/>
            <person name="Sugiyama A."/>
            <person name="Takemoto M."/>
            <person name="Kawakami B."/>
            <person name="Yamazaki M."/>
            <person name="Watanabe K."/>
            <person name="Kumagai A."/>
            <person name="Itakura S."/>
            <person name="Fukuzumi Y."/>
            <person name="Fujimori Y."/>
            <person name="Komiyama M."/>
            <person name="Tashiro H."/>
            <person name="Tanigami A."/>
            <person name="Fujiwara T."/>
            <person name="Ono T."/>
            <person name="Yamada K."/>
            <person name="Fujii Y."/>
            <person name="Ozaki K."/>
            <person name="Hirao M."/>
            <person name="Ohmori Y."/>
            <person name="Kawabata A."/>
            <person name="Hikiji T."/>
            <person name="Kobatake N."/>
            <person name="Inagaki H."/>
            <person name="Ikema Y."/>
            <person name="Okamoto S."/>
            <person name="Okitani R."/>
            <person name="Kawakami T."/>
            <person name="Noguchi S."/>
            <person name="Itoh T."/>
            <person name="Shigeta K."/>
            <person name="Senba T."/>
            <person name="Matsumura K."/>
            <person name="Nakajima Y."/>
            <person name="Mizuno T."/>
            <person name="Morinaga M."/>
            <person name="Sasaki M."/>
            <person name="Togashi T."/>
            <person name="Oyama M."/>
            <person name="Hata H."/>
            <person name="Watanabe M."/>
            <person name="Komatsu T."/>
            <person name="Mizushima-Sugano J."/>
            <person name="Satoh T."/>
            <person name="Shirai Y."/>
            <person name="Takahashi Y."/>
            <person name="Nakagawa K."/>
            <person name="Okumura K."/>
            <person name="Nagase T."/>
            <person name="Nomura N."/>
            <person name="Kikuchi H."/>
            <person name="Masuho Y."/>
            <person name="Yamashita R."/>
            <person name="Nakai K."/>
            <person name="Yada T."/>
            <person name="Nakamura Y."/>
            <person name="Ohara O."/>
            <person name="Isogai T."/>
            <person name="Sugano S."/>
        </authorList>
    </citation>
    <scope>NUCLEOTIDE SEQUENCE [LARGE SCALE MRNA]</scope>
</reference>
<reference key="6">
    <citation type="journal article" date="2005" name="Nature">
        <title>Generation and annotation of the DNA sequences of human chromosomes 2 and 4.</title>
        <authorList>
            <person name="Hillier L.W."/>
            <person name="Graves T.A."/>
            <person name="Fulton R.S."/>
            <person name="Fulton L.A."/>
            <person name="Pepin K.H."/>
            <person name="Minx P."/>
            <person name="Wagner-McPherson C."/>
            <person name="Layman D."/>
            <person name="Wylie K."/>
            <person name="Sekhon M."/>
            <person name="Becker M.C."/>
            <person name="Fewell G.A."/>
            <person name="Delehaunty K.D."/>
            <person name="Miner T.L."/>
            <person name="Nash W.E."/>
            <person name="Kremitzki C."/>
            <person name="Oddy L."/>
            <person name="Du H."/>
            <person name="Sun H."/>
            <person name="Bradshaw-Cordum H."/>
            <person name="Ali J."/>
            <person name="Carter J."/>
            <person name="Cordes M."/>
            <person name="Harris A."/>
            <person name="Isak A."/>
            <person name="van Brunt A."/>
            <person name="Nguyen C."/>
            <person name="Du F."/>
            <person name="Courtney L."/>
            <person name="Kalicki J."/>
            <person name="Ozersky P."/>
            <person name="Abbott S."/>
            <person name="Armstrong J."/>
            <person name="Belter E.A."/>
            <person name="Caruso L."/>
            <person name="Cedroni M."/>
            <person name="Cotton M."/>
            <person name="Davidson T."/>
            <person name="Desai A."/>
            <person name="Elliott G."/>
            <person name="Erb T."/>
            <person name="Fronick C."/>
            <person name="Gaige T."/>
            <person name="Haakenson W."/>
            <person name="Haglund K."/>
            <person name="Holmes A."/>
            <person name="Harkins R."/>
            <person name="Kim K."/>
            <person name="Kruchowski S.S."/>
            <person name="Strong C.M."/>
            <person name="Grewal N."/>
            <person name="Goyea E."/>
            <person name="Hou S."/>
            <person name="Levy A."/>
            <person name="Martinka S."/>
            <person name="Mead K."/>
            <person name="McLellan M.D."/>
            <person name="Meyer R."/>
            <person name="Randall-Maher J."/>
            <person name="Tomlinson C."/>
            <person name="Dauphin-Kohlberg S."/>
            <person name="Kozlowicz-Reilly A."/>
            <person name="Shah N."/>
            <person name="Swearengen-Shahid S."/>
            <person name="Snider J."/>
            <person name="Strong J.T."/>
            <person name="Thompson J."/>
            <person name="Yoakum M."/>
            <person name="Leonard S."/>
            <person name="Pearman C."/>
            <person name="Trani L."/>
            <person name="Radionenko M."/>
            <person name="Waligorski J.E."/>
            <person name="Wang C."/>
            <person name="Rock S.M."/>
            <person name="Tin-Wollam A.-M."/>
            <person name="Maupin R."/>
            <person name="Latreille P."/>
            <person name="Wendl M.C."/>
            <person name="Yang S.-P."/>
            <person name="Pohl C."/>
            <person name="Wallis J.W."/>
            <person name="Spieth J."/>
            <person name="Bieri T.A."/>
            <person name="Berkowicz N."/>
            <person name="Nelson J.O."/>
            <person name="Osborne J."/>
            <person name="Ding L."/>
            <person name="Meyer R."/>
            <person name="Sabo A."/>
            <person name="Shotland Y."/>
            <person name="Sinha P."/>
            <person name="Wohldmann P.E."/>
            <person name="Cook L.L."/>
            <person name="Hickenbotham M.T."/>
            <person name="Eldred J."/>
            <person name="Williams D."/>
            <person name="Jones T.A."/>
            <person name="She X."/>
            <person name="Ciccarelli F.D."/>
            <person name="Izaurralde E."/>
            <person name="Taylor J."/>
            <person name="Schmutz J."/>
            <person name="Myers R.M."/>
            <person name="Cox D.R."/>
            <person name="Huang X."/>
            <person name="McPherson J.D."/>
            <person name="Mardis E.R."/>
            <person name="Clifton S.W."/>
            <person name="Warren W.C."/>
            <person name="Chinwalla A.T."/>
            <person name="Eddy S.R."/>
            <person name="Marra M.A."/>
            <person name="Ovcharenko I."/>
            <person name="Furey T.S."/>
            <person name="Miller W."/>
            <person name="Eichler E.E."/>
            <person name="Bork P."/>
            <person name="Suyama M."/>
            <person name="Torrents D."/>
            <person name="Waterston R.H."/>
            <person name="Wilson R.K."/>
        </authorList>
    </citation>
    <scope>NUCLEOTIDE SEQUENCE [LARGE SCALE GENOMIC DNA]</scope>
</reference>
<reference key="7">
    <citation type="submission" date="2005-07" db="EMBL/GenBank/DDBJ databases">
        <authorList>
            <person name="Mural R.J."/>
            <person name="Istrail S."/>
            <person name="Sutton G.G."/>
            <person name="Florea L."/>
            <person name="Halpern A.L."/>
            <person name="Mobarry C.M."/>
            <person name="Lippert R."/>
            <person name="Walenz B."/>
            <person name="Shatkay H."/>
            <person name="Dew I."/>
            <person name="Miller J.R."/>
            <person name="Flanigan M.J."/>
            <person name="Edwards N.J."/>
            <person name="Bolanos R."/>
            <person name="Fasulo D."/>
            <person name="Halldorsson B.V."/>
            <person name="Hannenhalli S."/>
            <person name="Turner R."/>
            <person name="Yooseph S."/>
            <person name="Lu F."/>
            <person name="Nusskern D.R."/>
            <person name="Shue B.C."/>
            <person name="Zheng X.H."/>
            <person name="Zhong F."/>
            <person name="Delcher A.L."/>
            <person name="Huson D.H."/>
            <person name="Kravitz S.A."/>
            <person name="Mouchard L."/>
            <person name="Reinert K."/>
            <person name="Remington K.A."/>
            <person name="Clark A.G."/>
            <person name="Waterman M.S."/>
            <person name="Eichler E.E."/>
            <person name="Adams M.D."/>
            <person name="Hunkapiller M.W."/>
            <person name="Myers E.W."/>
            <person name="Venter J.C."/>
        </authorList>
    </citation>
    <scope>NUCLEOTIDE SEQUENCE [LARGE SCALE GENOMIC DNA]</scope>
</reference>
<reference key="8">
    <citation type="journal article" date="2004" name="Genome Res.">
        <title>The status, quality, and expansion of the NIH full-length cDNA project: the Mammalian Gene Collection (MGC).</title>
        <authorList>
            <consortium name="The MGC Project Team"/>
        </authorList>
    </citation>
    <scope>NUCLEOTIDE SEQUENCE [LARGE SCALE MRNA]</scope>
    <source>
        <tissue>Brain</tissue>
        <tissue>Eye</tissue>
        <tissue>Pancreas</tissue>
    </source>
</reference>
<reference key="9">
    <citation type="journal article" date="1992" name="Electrophoresis">
        <title>Human liver protein map: a reference database established by microsequencing and gel comparison.</title>
        <authorList>
            <person name="Hochstrasser D.F."/>
            <person name="Frutiger S."/>
            <person name="Paquet N."/>
            <person name="Bairoch A."/>
            <person name="Ravier F."/>
            <person name="Pasquali C."/>
            <person name="Sanchez J.-C."/>
            <person name="Tissot J.-D."/>
            <person name="Bjellqvist B."/>
            <person name="Vargas R."/>
            <person name="Appel R.D."/>
            <person name="Hughes G.J."/>
        </authorList>
    </citation>
    <scope>PROTEIN SEQUENCE OF 2-11</scope>
    <source>
        <tissue>Liver</tissue>
    </source>
</reference>
<reference key="10">
    <citation type="submission" date="2008-12" db="UniProtKB">
        <authorList>
            <person name="Lubec G."/>
            <person name="Chen W.-Q."/>
            <person name="Sun Y."/>
        </authorList>
    </citation>
    <scope>PROTEIN SEQUENCE OF 8-22; 140-157 AND 164-176</scope>
    <scope>IDENTIFICATION BY MASS SPECTROMETRY</scope>
    <source>
        <tissue>Fetal brain cortex</tissue>
    </source>
</reference>
<reference key="11">
    <citation type="journal article" date="1992" name="Electrophoresis">
        <title>Microsequences of 145 proteins recorded in the two-dimensional gel protein database of normal human epidermal keratinocytes.</title>
        <authorList>
            <person name="Rasmussen H.H."/>
            <person name="van Damme J."/>
            <person name="Puype M."/>
            <person name="Gesser B."/>
            <person name="Celis J.E."/>
            <person name="Vandekerckhove J."/>
        </authorList>
    </citation>
    <scope>PROTEIN SEQUENCE OF 55-60; 79-85; 123-127 AND 164-175</scope>
    <source>
        <tissue>Keratinocyte</tissue>
    </source>
</reference>
<reference key="12">
    <citation type="journal article" date="1998" name="J. Biol. Chem.">
        <title>Induction of acute translational response genes by homocysteine. Elongation factors-1alpha, -beta, and -delta.</title>
        <authorList>
            <person name="Chacko G."/>
            <person name="Ling Q."/>
            <person name="Hajjar K.A."/>
        </authorList>
    </citation>
    <scope>INDUCTION BY HOMOCYSTEINE</scope>
</reference>
<reference key="13">
    <citation type="journal article" date="2003" name="Nature">
        <title>Proteomic characterization of the human centrosome by protein correlation profiling.</title>
        <authorList>
            <person name="Andersen J.S."/>
            <person name="Wilkinson C.J."/>
            <person name="Mayor T."/>
            <person name="Mortensen P."/>
            <person name="Nigg E.A."/>
            <person name="Mann M."/>
        </authorList>
    </citation>
    <scope>IDENTIFICATION BY MASS SPECTROMETRY</scope>
    <source>
        <tissue>Lymphoblast</tissue>
    </source>
</reference>
<reference key="14">
    <citation type="journal article" date="2006" name="Cell">
        <title>Global, in vivo, and site-specific phosphorylation dynamics in signaling networks.</title>
        <authorList>
            <person name="Olsen J.V."/>
            <person name="Blagoev B."/>
            <person name="Gnad F."/>
            <person name="Macek B."/>
            <person name="Kumar C."/>
            <person name="Mortensen P."/>
            <person name="Mann M."/>
        </authorList>
    </citation>
    <scope>PHOSPHORYLATION [LARGE SCALE ANALYSIS] AT SER-106</scope>
    <scope>IDENTIFICATION BY MASS SPECTROMETRY [LARGE SCALE ANALYSIS]</scope>
    <source>
        <tissue>Cervix carcinoma</tissue>
    </source>
</reference>
<reference key="15">
    <citation type="journal article" date="2007" name="Electrophoresis">
        <title>Toward a global characterization of the phosphoproteome in prostate cancer cells: identification of phosphoproteins in the LNCaP cell line.</title>
        <authorList>
            <person name="Giorgianni F."/>
            <person name="Zhao Y."/>
            <person name="Desiderio D.M."/>
            <person name="Beranova-Giorgianni S."/>
        </authorList>
    </citation>
    <scope>PHOSPHORYLATION [LARGE SCALE ANALYSIS] AT SER-106</scope>
    <scope>IDENTIFICATION BY MASS SPECTROMETRY [LARGE SCALE ANALYSIS]</scope>
    <source>
        <tissue>Prostate cancer</tissue>
    </source>
</reference>
<reference key="16">
    <citation type="journal article" date="2007" name="Mol. Cell. Proteomics">
        <title>Quantitative phosphoproteome profiling of Wnt3a-mediated signaling network: indicating the involvement of ribonucleoside-diphosphate reductase M2 subunit phosphorylation at residue serine 20 in canonical Wnt signal transduction.</title>
        <authorList>
            <person name="Tang L.-Y."/>
            <person name="Deng N."/>
            <person name="Wang L.-S."/>
            <person name="Dai J."/>
            <person name="Wang Z.-L."/>
            <person name="Jiang X.-S."/>
            <person name="Li S.-J."/>
            <person name="Li L."/>
            <person name="Sheng Q.-H."/>
            <person name="Wu D.-Q."/>
            <person name="Li L."/>
            <person name="Zeng R."/>
        </authorList>
    </citation>
    <scope>PHOSPHORYLATION [LARGE SCALE ANALYSIS] AT SER-106</scope>
    <scope>IDENTIFICATION BY MASS SPECTROMETRY [LARGE SCALE ANALYSIS]</scope>
    <source>
        <tissue>Embryonic kidney</tissue>
    </source>
</reference>
<reference key="17">
    <citation type="journal article" date="2008" name="Mol. Cell">
        <title>Kinase-selective enrichment enables quantitative phosphoproteomics of the kinome across the cell cycle.</title>
        <authorList>
            <person name="Daub H."/>
            <person name="Olsen J.V."/>
            <person name="Bairlein M."/>
            <person name="Gnad F."/>
            <person name="Oppermann F.S."/>
            <person name="Korner R."/>
            <person name="Greff Z."/>
            <person name="Keri G."/>
            <person name="Stemmann O."/>
            <person name="Mann M."/>
        </authorList>
    </citation>
    <scope>PHOSPHORYLATION [LARGE SCALE ANALYSIS] AT SER-106</scope>
    <scope>IDENTIFICATION BY MASS SPECTROMETRY [LARGE SCALE ANALYSIS]</scope>
    <source>
        <tissue>Cervix carcinoma</tissue>
    </source>
</reference>
<reference key="18">
    <citation type="journal article" date="2008" name="Proc. Natl. Acad. Sci. U.S.A.">
        <title>A quantitative atlas of mitotic phosphorylation.</title>
        <authorList>
            <person name="Dephoure N."/>
            <person name="Zhou C."/>
            <person name="Villen J."/>
            <person name="Beausoleil S.A."/>
            <person name="Bakalarski C.E."/>
            <person name="Elledge S.J."/>
            <person name="Gygi S.P."/>
        </authorList>
    </citation>
    <scope>PHOSPHORYLATION [LARGE SCALE ANALYSIS] AT SER-8; SER-95 AND SER-106</scope>
    <scope>IDENTIFICATION BY MASS SPECTROMETRY [LARGE SCALE ANALYSIS]</scope>
    <source>
        <tissue>Cervix carcinoma</tissue>
    </source>
</reference>
<reference key="19">
    <citation type="journal article" date="2008" name="Proteomics">
        <title>Large-scale phosphoproteome analysis of human liver tissue by enrichment and fractionation of phosphopeptides with strong anion exchange chromatography.</title>
        <authorList>
            <person name="Han G."/>
            <person name="Ye M."/>
            <person name="Zhou H."/>
            <person name="Jiang X."/>
            <person name="Feng S."/>
            <person name="Jiang X."/>
            <person name="Tian R."/>
            <person name="Wan D."/>
            <person name="Zou H."/>
            <person name="Gu J."/>
        </authorList>
    </citation>
    <scope>PHOSPHORYLATION [LARGE SCALE ANALYSIS] AT SER-106</scope>
    <scope>IDENTIFICATION BY MASS SPECTROMETRY [LARGE SCALE ANALYSIS]</scope>
    <source>
        <tissue>Liver</tissue>
    </source>
</reference>
<reference key="20">
    <citation type="journal article" date="2009" name="Anal. Chem.">
        <title>Lys-N and trypsin cover complementary parts of the phosphoproteome in a refined SCX-based approach.</title>
        <authorList>
            <person name="Gauci S."/>
            <person name="Helbig A.O."/>
            <person name="Slijper M."/>
            <person name="Krijgsveld J."/>
            <person name="Heck A.J."/>
            <person name="Mohammed S."/>
        </authorList>
    </citation>
    <scope>IDENTIFICATION BY MASS SPECTROMETRY [LARGE SCALE ANALYSIS]</scope>
</reference>
<reference key="21">
    <citation type="journal article" date="2009" name="Mol. Cell. Proteomics">
        <title>Large-scale proteomics analysis of the human kinome.</title>
        <authorList>
            <person name="Oppermann F.S."/>
            <person name="Gnad F."/>
            <person name="Olsen J.V."/>
            <person name="Hornberger R."/>
            <person name="Greff Z."/>
            <person name="Keri G."/>
            <person name="Mann M."/>
            <person name="Daub H."/>
        </authorList>
    </citation>
    <scope>PHOSPHORYLATION [LARGE SCALE ANALYSIS] AT SER-106</scope>
    <scope>IDENTIFICATION BY MASS SPECTROMETRY [LARGE SCALE ANALYSIS]</scope>
</reference>
<reference key="22">
    <citation type="journal article" date="2009" name="Sci. Signal.">
        <title>Quantitative phosphoproteomic analysis of T cell receptor signaling reveals system-wide modulation of protein-protein interactions.</title>
        <authorList>
            <person name="Mayya V."/>
            <person name="Lundgren D.H."/>
            <person name="Hwang S.-I."/>
            <person name="Rezaul K."/>
            <person name="Wu L."/>
            <person name="Eng J.K."/>
            <person name="Rodionov V."/>
            <person name="Han D.K."/>
        </authorList>
    </citation>
    <scope>PHOSPHORYLATION [LARGE SCALE ANALYSIS] AT SER-8; SER-95 AND SER-106</scope>
    <scope>IDENTIFICATION BY MASS SPECTROMETRY [LARGE SCALE ANALYSIS]</scope>
    <source>
        <tissue>Leukemic T-cell</tissue>
    </source>
</reference>
<reference key="23">
    <citation type="journal article" date="2009" name="Science">
        <title>Lysine acetylation targets protein complexes and co-regulates major cellular functions.</title>
        <authorList>
            <person name="Choudhary C."/>
            <person name="Kumar C."/>
            <person name="Gnad F."/>
            <person name="Nielsen M.L."/>
            <person name="Rehman M."/>
            <person name="Walther T.C."/>
            <person name="Olsen J.V."/>
            <person name="Mann M."/>
        </authorList>
    </citation>
    <scope>ACETYLATION [LARGE SCALE ANALYSIS] AT LYS-7</scope>
    <scope>IDENTIFICATION BY MASS SPECTROMETRY [LARGE SCALE ANALYSIS]</scope>
</reference>
<reference key="24">
    <citation type="journal article" date="2010" name="Sci. Signal.">
        <title>Quantitative phosphoproteomics reveals widespread full phosphorylation site occupancy during mitosis.</title>
        <authorList>
            <person name="Olsen J.V."/>
            <person name="Vermeulen M."/>
            <person name="Santamaria A."/>
            <person name="Kumar C."/>
            <person name="Miller M.L."/>
            <person name="Jensen L.J."/>
            <person name="Gnad F."/>
            <person name="Cox J."/>
            <person name="Jensen T.S."/>
            <person name="Nigg E.A."/>
            <person name="Brunak S."/>
            <person name="Mann M."/>
        </authorList>
    </citation>
    <scope>PHOSPHORYLATION [LARGE SCALE ANALYSIS] AT SER-95 AND SER-106</scope>
    <scope>IDENTIFICATION BY MASS SPECTROMETRY [LARGE SCALE ANALYSIS]</scope>
    <source>
        <tissue>Cervix carcinoma</tissue>
    </source>
</reference>
<reference key="25">
    <citation type="journal article" date="2011" name="BMC Syst. Biol.">
        <title>Initial characterization of the human central proteome.</title>
        <authorList>
            <person name="Burkard T.R."/>
            <person name="Planyavsky M."/>
            <person name="Kaupe I."/>
            <person name="Breitwieser F.P."/>
            <person name="Buerckstuemmer T."/>
            <person name="Bennett K.L."/>
            <person name="Superti-Furga G."/>
            <person name="Colinge J."/>
        </authorList>
    </citation>
    <scope>IDENTIFICATION BY MASS SPECTROMETRY [LARGE SCALE ANALYSIS]</scope>
</reference>
<reference key="26">
    <citation type="journal article" date="2011" name="Sci. Signal.">
        <title>System-wide temporal characterization of the proteome and phosphoproteome of human embryonic stem cell differentiation.</title>
        <authorList>
            <person name="Rigbolt K.T."/>
            <person name="Prokhorova T.A."/>
            <person name="Akimov V."/>
            <person name="Henningsen J."/>
            <person name="Johansen P.T."/>
            <person name="Kratchmarova I."/>
            <person name="Kassem M."/>
            <person name="Mann M."/>
            <person name="Olsen J.V."/>
            <person name="Blagoev B."/>
        </authorList>
    </citation>
    <scope>PHOSPHORYLATION [LARGE SCALE ANALYSIS] AT SER-8; THR-93; SER-95 AND SER-106</scope>
    <scope>IDENTIFICATION BY MASS SPECTROMETRY [LARGE SCALE ANALYSIS]</scope>
</reference>
<reference key="27">
    <citation type="journal article" date="2013" name="J. Proteome Res.">
        <title>Toward a comprehensive characterization of a human cancer cell phosphoproteome.</title>
        <authorList>
            <person name="Zhou H."/>
            <person name="Di Palma S."/>
            <person name="Preisinger C."/>
            <person name="Peng M."/>
            <person name="Polat A.N."/>
            <person name="Heck A.J."/>
            <person name="Mohammed S."/>
        </authorList>
    </citation>
    <scope>PHOSPHORYLATION [LARGE SCALE ANALYSIS] AT SER-8; SER-95; SER-106 AND SER-174</scope>
    <scope>IDENTIFICATION BY MASS SPECTROMETRY [LARGE SCALE ANALYSIS]</scope>
    <source>
        <tissue>Cervix carcinoma</tissue>
        <tissue>Erythroleukemia</tissue>
    </source>
</reference>
<reference key="28">
    <citation type="journal article" date="2014" name="J. Proteomics">
        <title>An enzyme assisted RP-RPLC approach for in-depth analysis of human liver phosphoproteome.</title>
        <authorList>
            <person name="Bian Y."/>
            <person name="Song C."/>
            <person name="Cheng K."/>
            <person name="Dong M."/>
            <person name="Wang F."/>
            <person name="Huang J."/>
            <person name="Sun D."/>
            <person name="Wang L."/>
            <person name="Ye M."/>
            <person name="Zou H."/>
        </authorList>
    </citation>
    <scope>PHOSPHORYLATION [LARGE SCALE ANALYSIS] AT SER-42 AND SER-106</scope>
    <scope>IDENTIFICATION BY MASS SPECTROMETRY [LARGE SCALE ANALYSIS]</scope>
    <source>
        <tissue>Liver</tissue>
    </source>
</reference>
<reference key="29">
    <citation type="journal article" date="2015" name="Proteomics">
        <title>N-terminome analysis of the human mitochondrial proteome.</title>
        <authorList>
            <person name="Vaca Jacome A.S."/>
            <person name="Rabilloud T."/>
            <person name="Schaeffer-Reiss C."/>
            <person name="Rompais M."/>
            <person name="Ayoub D."/>
            <person name="Lane L."/>
            <person name="Bairoch A."/>
            <person name="Van Dorsselaer A."/>
            <person name="Carapito C."/>
        </authorList>
    </citation>
    <scope>IDENTIFICATION BY MASS SPECTROMETRY [LARGE SCALE ANALYSIS]</scope>
</reference>
<reference key="30">
    <citation type="journal article" date="2017" name="Nat. Struct. Mol. Biol.">
        <title>Site-specific mapping of the human SUMO proteome reveals co-modification with phosphorylation.</title>
        <authorList>
            <person name="Hendriks I.A."/>
            <person name="Lyon D."/>
            <person name="Young C."/>
            <person name="Jensen L.J."/>
            <person name="Vertegaal A.C."/>
            <person name="Nielsen M.L."/>
        </authorList>
    </citation>
    <scope>SUMOYLATION [LARGE SCALE ANALYSIS] AT LYS-147</scope>
    <scope>IDENTIFICATION BY MASS SPECTROMETRY [LARGE SCALE ANALYSIS]</scope>
</reference>
<comment type="function">
    <text evidence="3">Catalytic subunit of the guanine nucleotide exchange factor (GEF) (eEF1B subcomplex) of the eukaryotic elongation factor 1 complex (eEF1) (By similarity). Stimulates the exchange of GDP for GTP on elongation factor 1A (eEF1A), probably by displacing GDP from the nucleotide binding pocket in eEF1A (By similarity).</text>
</comment>
<comment type="subunit">
    <text evidence="1 7">EF-1 is composed of 4 subunits: alpha, beta (alpha subunit of the eEF1B subcomplex), delta (beta subunit of the eEF1B subcomplex), and gamma (gamma subunit of the eEF1B subcomplex) (Probable). Interacts with elongation factor EEF1A1 (By similarity).</text>
</comment>
<comment type="interaction">
    <interactant intactId="EBI-354334">
        <id>P24534</id>
    </interactant>
    <interactant intactId="EBI-351467">
        <id>P26641</id>
        <label>EEF1G</label>
    </interactant>
    <organismsDiffer>false</organismsDiffer>
    <experiments>12</experiments>
</comment>
<comment type="interaction">
    <interactant intactId="EBI-354334">
        <id>P24534</id>
    </interactant>
    <interactant intactId="EBI-10177695">
        <id>P26641-2</id>
        <label>EEF1G</label>
    </interactant>
    <organismsDiffer>false</organismsDiffer>
    <experiments>3</experiments>
</comment>
<comment type="interaction">
    <interactant intactId="EBI-354334">
        <id>P24534</id>
    </interactant>
    <interactant intactId="EBI-466029">
        <id>P42858</id>
        <label>HTT</label>
    </interactant>
    <organismsDiffer>false</organismsDiffer>
    <experiments>7</experiments>
</comment>
<comment type="interaction">
    <interactant intactId="EBI-354334">
        <id>P24534</id>
    </interactant>
    <interactant intactId="EBI-8602056">
        <id>Q8WW59</id>
        <label>SPRYD4</label>
    </interactant>
    <organismsDiffer>false</organismsDiffer>
    <experiments>3</experiments>
</comment>
<comment type="induction">
    <text evidence="6">By homocysteine (HC), may mediate accelerated synthesis of free thiol-containing proteins in response to HC-induced oxidative stress.</text>
</comment>
<comment type="PTM">
    <text>Phosphorylation affects the GDP/GTP exchange rate.</text>
</comment>
<comment type="similarity">
    <text evidence="7">Belongs to the EF-1-beta/EF-1-delta family.</text>
</comment>
<evidence type="ECO:0000250" key="1">
    <source>
        <dbReference type="UniProtKB" id="A6IPG1"/>
    </source>
</evidence>
<evidence type="ECO:0000250" key="2">
    <source>
        <dbReference type="UniProtKB" id="O70251"/>
    </source>
</evidence>
<evidence type="ECO:0000250" key="3">
    <source>
        <dbReference type="UniProtKB" id="P32471"/>
    </source>
</evidence>
<evidence type="ECO:0000256" key="4">
    <source>
        <dbReference type="SAM" id="MobiDB-lite"/>
    </source>
</evidence>
<evidence type="ECO:0000269" key="5">
    <source>
    </source>
</evidence>
<evidence type="ECO:0000269" key="6">
    <source>
    </source>
</evidence>
<evidence type="ECO:0000305" key="7"/>
<evidence type="ECO:0007744" key="8">
    <source>
    </source>
</evidence>
<evidence type="ECO:0007744" key="9">
    <source>
    </source>
</evidence>
<evidence type="ECO:0007744" key="10">
    <source>
    </source>
</evidence>
<evidence type="ECO:0007744" key="11">
    <source>
    </source>
</evidence>
<evidence type="ECO:0007744" key="12">
    <source>
    </source>
</evidence>
<evidence type="ECO:0007744" key="13">
    <source>
    </source>
</evidence>
<evidence type="ECO:0007744" key="14">
    <source>
    </source>
</evidence>
<evidence type="ECO:0007744" key="15">
    <source>
    </source>
</evidence>
<evidence type="ECO:0007744" key="16">
    <source>
    </source>
</evidence>
<evidence type="ECO:0007744" key="17">
    <source>
    </source>
</evidence>
<evidence type="ECO:0007744" key="18">
    <source>
    </source>
</evidence>
<evidence type="ECO:0007744" key="19">
    <source>
    </source>
</evidence>
<evidence type="ECO:0007744" key="20">
    <source>
    </source>
</evidence>
<evidence type="ECO:0007744" key="21">
    <source>
    </source>
</evidence>
<evidence type="ECO:0007829" key="22">
    <source>
        <dbReference type="PDB" id="1B64"/>
    </source>
</evidence>
<evidence type="ECO:0007829" key="23">
    <source>
        <dbReference type="PDB" id="5DQS"/>
    </source>
</evidence>